<accession>P15928</accession>
<gene>
    <name type="primary">fliF</name>
    <name type="synonym">fla AII.1</name>
    <name type="synonym">fla BI</name>
    <name type="ordered locus">STM1969</name>
</gene>
<reference key="1">
    <citation type="journal article" date="1989" name="J. Bacteriol.">
        <title>L-, P-, and M-ring proteins of the flagellar basal body of Salmonella typhimurium: gene sequences and deduced protein sequences.</title>
        <authorList>
            <person name="Jones C.J."/>
            <person name="Homma M."/>
            <person name="Macnab R.M."/>
        </authorList>
    </citation>
    <scope>NUCLEOTIDE SEQUENCE [GENOMIC DNA]</scope>
</reference>
<reference key="2">
    <citation type="journal article" date="2001" name="Nature">
        <title>Complete genome sequence of Salmonella enterica serovar Typhimurium LT2.</title>
        <authorList>
            <person name="McClelland M."/>
            <person name="Sanderson K.E."/>
            <person name="Spieth J."/>
            <person name="Clifton S.W."/>
            <person name="Latreille P."/>
            <person name="Courtney L."/>
            <person name="Porwollik S."/>
            <person name="Ali J."/>
            <person name="Dante M."/>
            <person name="Du F."/>
            <person name="Hou S."/>
            <person name="Layman D."/>
            <person name="Leonard S."/>
            <person name="Nguyen C."/>
            <person name="Scott K."/>
            <person name="Holmes A."/>
            <person name="Grewal N."/>
            <person name="Mulvaney E."/>
            <person name="Ryan E."/>
            <person name="Sun H."/>
            <person name="Florea L."/>
            <person name="Miller W."/>
            <person name="Stoneking T."/>
            <person name="Nhan M."/>
            <person name="Waterston R."/>
            <person name="Wilson R.K."/>
        </authorList>
    </citation>
    <scope>NUCLEOTIDE SEQUENCE [LARGE SCALE GENOMIC DNA]</scope>
    <source>
        <strain>LT2 / SGSC1412 / ATCC 700720</strain>
    </source>
</reference>
<reference key="3">
    <citation type="journal article" date="1992" name="J. Bacteriol.">
        <title>Characterization of the fliE genes of Escherichia coli and Salmonella typhimurium and identification of the FliE protein as a component of the flagellar hook-basal body complex.</title>
        <authorList>
            <person name="Mueller V."/>
            <person name="Jones C.J."/>
            <person name="Kawagishi I."/>
            <person name="Aizawa S."/>
            <person name="Macnab R.M."/>
        </authorList>
    </citation>
    <scope>NUCLEOTIDE SEQUENCE [GENOMIC DNA] OF 1-27</scope>
    <source>
        <strain>SJW1103</strain>
    </source>
</reference>
<reference key="4">
    <citation type="journal article" date="2011" name="J. Bacteriol.">
        <title>EAL domain protein YdiV acts as an anti-FlhD4C2 factor responsible for nutritional control of the flagellar regulon in Salmonella enterica Serovar Typhimurium.</title>
        <authorList>
            <person name="Wada T."/>
            <person name="Morizane T."/>
            <person name="Abo T."/>
            <person name="Tominaga A."/>
            <person name="Inoue-Tanaka K."/>
            <person name="Kutsukake K."/>
        </authorList>
    </citation>
    <scope>INDUCTION</scope>
    <source>
        <strain>LT2 / SGSC1412 / ATCC 700720</strain>
    </source>
</reference>
<feature type="initiator methionine" description="Removed">
    <location>
        <position position="1"/>
    </location>
</feature>
<feature type="chain" id="PRO_0000180883" description="Flagellar M-ring protein">
    <location>
        <begin position="2"/>
        <end position="560"/>
    </location>
</feature>
<feature type="transmembrane region" description="Helical" evidence="1">
    <location>
        <begin position="26"/>
        <end position="46"/>
    </location>
</feature>
<feature type="transmembrane region" description="Helical" evidence="1">
    <location>
        <begin position="455"/>
        <end position="475"/>
    </location>
</feature>
<feature type="region of interest" description="Disordered" evidence="2">
    <location>
        <begin position="304"/>
        <end position="372"/>
    </location>
</feature>
<feature type="compositionally biased region" description="Low complexity" evidence="2">
    <location>
        <begin position="331"/>
        <end position="353"/>
    </location>
</feature>
<feature type="compositionally biased region" description="Polar residues" evidence="2">
    <location>
        <begin position="354"/>
        <end position="366"/>
    </location>
</feature>
<feature type="helix" evidence="5">
    <location>
        <begin position="126"/>
        <end position="145"/>
    </location>
</feature>
<feature type="strand" evidence="5">
    <location>
        <begin position="146"/>
        <end position="152"/>
    </location>
</feature>
<feature type="strand" evidence="5">
    <location>
        <begin position="156"/>
        <end position="158"/>
    </location>
</feature>
<feature type="strand" evidence="5">
    <location>
        <begin position="173"/>
        <end position="177"/>
    </location>
</feature>
<feature type="helix" evidence="5">
    <location>
        <begin position="188"/>
        <end position="199"/>
    </location>
</feature>
<feature type="strand" evidence="5">
    <location>
        <begin position="200"/>
        <end position="202"/>
    </location>
</feature>
<feature type="helix" evidence="5">
    <location>
        <begin position="207"/>
        <end position="209"/>
    </location>
</feature>
<feature type="strand" evidence="5">
    <location>
        <begin position="210"/>
        <end position="213"/>
    </location>
</feature>
<feature type="strand" evidence="5">
    <location>
        <begin position="215"/>
        <end position="217"/>
    </location>
</feature>
<feature type="turn" evidence="5">
    <location>
        <begin position="222"/>
        <end position="225"/>
    </location>
</feature>
<feature type="strand" evidence="5">
    <location>
        <begin position="227"/>
        <end position="230"/>
    </location>
</feature>
<feature type="helix" evidence="6">
    <location>
        <begin position="232"/>
        <end position="252"/>
    </location>
</feature>
<feature type="helix" evidence="6">
    <location>
        <begin position="254"/>
        <end position="257"/>
    </location>
</feature>
<feature type="strand" evidence="6">
    <location>
        <begin position="259"/>
        <end position="271"/>
    </location>
</feature>
<feature type="strand" evidence="6">
    <location>
        <begin position="274"/>
        <end position="278"/>
    </location>
</feature>
<feature type="turn" evidence="6">
    <location>
        <begin position="288"/>
        <end position="290"/>
    </location>
</feature>
<feature type="strand" evidence="6">
    <location>
        <begin position="292"/>
        <end position="302"/>
    </location>
</feature>
<feature type="strand" evidence="7">
    <location>
        <begin position="316"/>
        <end position="319"/>
    </location>
</feature>
<feature type="strand" evidence="6">
    <location>
        <begin position="358"/>
        <end position="367"/>
    </location>
</feature>
<feature type="strand" evidence="6">
    <location>
        <begin position="370"/>
        <end position="376"/>
    </location>
</feature>
<feature type="strand" evidence="6">
    <location>
        <begin position="381"/>
        <end position="391"/>
    </location>
</feature>
<feature type="helix" evidence="6">
    <location>
        <begin position="406"/>
        <end position="420"/>
    </location>
</feature>
<feature type="turn" evidence="6">
    <location>
        <begin position="424"/>
        <end position="427"/>
    </location>
</feature>
<feature type="strand" evidence="6">
    <location>
        <begin position="429"/>
        <end position="434"/>
    </location>
</feature>
<protein>
    <recommendedName>
        <fullName>Flagellar M-ring protein</fullName>
    </recommendedName>
</protein>
<name>FLIF_SALTY</name>
<proteinExistence type="evidence at protein level"/>
<dbReference type="EMBL" id="M24462">
    <property type="protein sequence ID" value="AAA27096.1"/>
    <property type="molecule type" value="Genomic_DNA"/>
</dbReference>
<dbReference type="EMBL" id="AE006468">
    <property type="protein sequence ID" value="AAL20881.1"/>
    <property type="molecule type" value="Genomic_DNA"/>
</dbReference>
<dbReference type="EMBL" id="M84993">
    <property type="protein sequence ID" value="AAA27094.1"/>
    <property type="molecule type" value="Genomic_DNA"/>
</dbReference>
<dbReference type="PIR" id="C32887">
    <property type="entry name" value="D30930"/>
</dbReference>
<dbReference type="RefSeq" id="NP_460922.1">
    <property type="nucleotide sequence ID" value="NC_003197.2"/>
</dbReference>
<dbReference type="RefSeq" id="WP_001276834.1">
    <property type="nucleotide sequence ID" value="NC_003197.2"/>
</dbReference>
<dbReference type="PDB" id="6SCN">
    <property type="method" value="EM"/>
    <property type="resolution" value="3.10 A"/>
    <property type="chains" value="A/B/C/D/E/F/G/H/I/J/K/L/M/N/O/P/Q/R/S/T/U/V/W/X/Y/Z/a/b/c/d=1-560"/>
</dbReference>
<dbReference type="PDB" id="6SD1">
    <property type="method" value="EM"/>
    <property type="resolution" value="2.60 A"/>
    <property type="chains" value="A/B/C/D/E/F/G/H/I/J/K/L/M/N/O/P/Q/R/S/T/U/V/W/X/Y/Z/a/b/c/d=1-560"/>
</dbReference>
<dbReference type="PDB" id="6SD2">
    <property type="method" value="EM"/>
    <property type="resolution" value="3.10 A"/>
    <property type="chains" value="A/C/D/F/G/I/J/L/N/O/Q/R/T/U/W/Y/Z/b/c/e/f=1-560"/>
</dbReference>
<dbReference type="PDB" id="6SD3">
    <property type="method" value="EM"/>
    <property type="resolution" value="3.30 A"/>
    <property type="chains" value="A/B/C/D/E/F/G/H/I/J/K/L/M/N/O/P/Q/R/S/T/U/V/W/X/Y/Z/a/b/c/d=1-560"/>
</dbReference>
<dbReference type="PDB" id="6SD4">
    <property type="method" value="EM"/>
    <property type="resolution" value="2.80 A"/>
    <property type="chains" value="A/B/C/D/E/F/G/H/I/J/K/L/M/N/O/P/Q/R/S/T/U/V/W/X/Y/Z/a/b/c/d=1-560"/>
</dbReference>
<dbReference type="PDB" id="6SD5">
    <property type="method" value="EM"/>
    <property type="resolution" value="3.10 A"/>
    <property type="chains" value="A/C/D/F/G/I/J/L/M/O/P/R/T/U/W/X/Z/a/c/d/f/g=1-560"/>
</dbReference>
<dbReference type="PDB" id="6TRE">
    <property type="method" value="EM"/>
    <property type="resolution" value="3.30 A"/>
    <property type="chains" value="1/2/3/4/5/6/A/B/C/D/E/F/G/H/I/J/K/L/M/N/O/P/Q/R/S/T/U/V/W/X=1-560"/>
</dbReference>
<dbReference type="PDB" id="7BK0">
    <property type="method" value="EM"/>
    <property type="resolution" value="3.80 A"/>
    <property type="chains" value="A/B/C/D/E/F/G/H/I/J/K/L/M/N/O/P/Q/R/S/T/U/V/W/X/Y/Z/a/b/c/d=1-560"/>
</dbReference>
<dbReference type="PDB" id="7CG0">
    <property type="method" value="EM"/>
    <property type="resolution" value="3.20 A"/>
    <property type="chains" value="5/6/7/8/9=311-331"/>
</dbReference>
<dbReference type="PDB" id="7CG7">
    <property type="method" value="EM"/>
    <property type="resolution" value="3.61 A"/>
    <property type="chains" value="A/B/C/D/E/F/G/H/I/J/K/L/M/N/O/P/Q/R/S/T/U/V/W/X/Y/Z/a/b/c/d=1-560"/>
</dbReference>
<dbReference type="PDB" id="7D84">
    <property type="method" value="EM"/>
    <property type="resolution" value="3.70 A"/>
    <property type="chains" value="A/B/C/D/E/F/G/H/I/J/K/L/M/N/O/P/Q/R/S/T/U/V/W/X/Y/Z/a/b/c/d=1-560"/>
</dbReference>
<dbReference type="PDB" id="7E80">
    <property type="method" value="EM"/>
    <property type="resolution" value="3.67 A"/>
    <property type="chains" value="5/6/7/8/9=311-331"/>
</dbReference>
<dbReference type="PDB" id="7E81">
    <property type="method" value="EM"/>
    <property type="resolution" value="4.50 A"/>
    <property type="chains" value="Ca/Cb/Cc/Cd/Ce/Cf/Ch/Ci/Cj/Ck/Cl/Cm/Cn/Co/Cp/Cq/Cr/Cs/Ct/Cu/Cv/Cw/Cx/Cy/Cz/Da/Db/Dc/Dd/De=1-560"/>
</dbReference>
<dbReference type="PDB" id="7E82">
    <property type="method" value="EM"/>
    <property type="resolution" value="3.30 A"/>
    <property type="chains" value="5/6/7/8/9=311-331"/>
</dbReference>
<dbReference type="PDB" id="7NVG">
    <property type="method" value="EM"/>
    <property type="resolution" value="3.70 A"/>
    <property type="chains" value="A1/B1/C1/D1/E1/F1/G1/H1/I1/J1/K1/L1/M1/N1/O1/P1/Q1/R1/S1/T1/U1/V1/W1/X1/Y1/Z1/a1/b1/c1/d1=1-560"/>
</dbReference>
<dbReference type="PDB" id="8FTE">
    <property type="method" value="EM"/>
    <property type="resolution" value="3.80 A"/>
    <property type="chains" value="A/B/C/D/E/F/G/H/I/J/K/L/M/N/O/P/Q/R/S/T/V/W=1-560"/>
</dbReference>
<dbReference type="PDB" id="8FTF">
    <property type="method" value="EM"/>
    <property type="resolution" value="2.90 A"/>
    <property type="chains" value="A/AA/B/BA/C/CA/D/DA/E/EA/F/FA/G/GA/H/HA/I/J/K/L/M/N/O/P/Q/R/S/T/V/W=1-560"/>
</dbReference>
<dbReference type="PDB" id="8T8P">
    <property type="method" value="EM"/>
    <property type="resolution" value="3.40 A"/>
    <property type="chains" value="A/AA/B/BA/C/CA/D/DA/E/EA/F/FA/G/GA/H/HA/I/J/K/L/M/N/O/P/Q/R/S/T/V/W=1-560"/>
</dbReference>
<dbReference type="PDB" id="8UMD">
    <property type="method" value="EM"/>
    <property type="resolution" value="3.60 A"/>
    <property type="chains" value="A=1-560"/>
</dbReference>
<dbReference type="PDB" id="8UMX">
    <property type="method" value="EM"/>
    <property type="resolution" value="4.00 A"/>
    <property type="chains" value="A=1-560"/>
</dbReference>
<dbReference type="PDB" id="8UOX">
    <property type="method" value="EM"/>
    <property type="resolution" value="4.60 A"/>
    <property type="chains" value="A1/A2/A3/A4/A5/A6/A7/A8/A9/AA/AB/AC/AD/AE/AF/AG/AH/AI/AJ/AK/AL/AM/AN/AO/AP/AQ/AR/AS/AT/AU=1-560"/>
</dbReference>
<dbReference type="PDB" id="8UPL">
    <property type="method" value="EM"/>
    <property type="resolution" value="5.40 A"/>
    <property type="chains" value="A1/A2/A3/A4/A5/A6/A7/A8/A9/AA/AB/AC/AD/AE/AF/AG/AH/AI/AJ/AK/AL/AM/AN/AO/AP/AQ/AR/AS/AT/AU=1-560"/>
</dbReference>
<dbReference type="PDB" id="8VIB">
    <property type="method" value="EM"/>
    <property type="resolution" value="4.60 A"/>
    <property type="chains" value="F=1-560"/>
</dbReference>
<dbReference type="PDB" id="8VID">
    <property type="method" value="EM"/>
    <property type="resolution" value="5.90 A"/>
    <property type="chains" value="F=1-560"/>
</dbReference>
<dbReference type="PDB" id="8VKQ">
    <property type="method" value="EM"/>
    <property type="resolution" value="4.60 A"/>
    <property type="chains" value="A/BC/BF/DB/DE/F/FA/FD/FG/HC/HF/I/JB/JE/LA/LD/LG/NC/NF/PB/PE/RA/RD/RG/S/TC/TF/VB/VE/XA=1-560"/>
</dbReference>
<dbReference type="PDB" id="8VKR">
    <property type="method" value="EM"/>
    <property type="resolution" value="5.90 A"/>
    <property type="chains" value="A/BC/BF/DB/DE/F/FA/FD/FG/HC/HF/I/JB/JE/LA/LD/LG/NC/NF/PB/PE/RA/RD/RG/S/TC/TF/VB/VE/XA=1-560"/>
</dbReference>
<dbReference type="PDB" id="8WIW">
    <property type="method" value="EM"/>
    <property type="resolution" value="5.60 A"/>
    <property type="chains" value="A2/A9/B0/B3/BF/BM/BT/Ba/Bh/Bo/Bv/C/CG/CN/CU/Cb/Ci/Cp/Cw/D/E/F/G/H/I/J/K/L/M/N=1-560"/>
</dbReference>
<dbReference type="PDB" id="8WJR">
    <property type="method" value="EM"/>
    <property type="resolution" value="2.90 A"/>
    <property type="chains" value="A/B/C/D/E/F/G/H/I/J/K/L/M/N/O/P/Q/R/S/T/U/V/W/X/Y/Z/a/b/c/d=1-560"/>
</dbReference>
<dbReference type="PDB" id="8WK3">
    <property type="method" value="EM"/>
    <property type="resolution" value="3.30 A"/>
    <property type="chains" value="b/c/d/e/f/g/h/i/j/k/l=1-560"/>
</dbReference>
<dbReference type="PDB" id="8WK4">
    <property type="method" value="EM"/>
    <property type="resolution" value="3.70 A"/>
    <property type="chains" value="A/B/C/D/E/F/G/H/I/J/K/L/M/N/O/P/Q/R/S/T/U/V/W/X/Y/Z/a/b/c/d=1-560"/>
</dbReference>
<dbReference type="PDB" id="8WKK">
    <property type="method" value="EM"/>
    <property type="resolution" value="3.30 A"/>
    <property type="chains" value="b/c/d/e/f/g/h/i/j/k/l=1-560"/>
</dbReference>
<dbReference type="PDB" id="8WKQ">
    <property type="method" value="EM"/>
    <property type="resolution" value="3.80 A"/>
    <property type="chains" value="0/1/2/3/4/5/6/7/8/9/AA/AB/AC/AD/AE/AF/AG/AH/AI/AJ/AK/AL/AM/AN/AO/AP/AQ/UI/UJ/UK=1-560"/>
</dbReference>
<dbReference type="PDB" id="8WL2">
    <property type="method" value="EM"/>
    <property type="resolution" value="3.40 A"/>
    <property type="chains" value="AO/AP/AQ/AR/AS/AT/AU/AV/AW/AX/AY/AZ/Aa/Ac/Ad/Ae/Af/Ag/Ah/Ai/Aj/Ak/Al/Am/An/Ao/Ap/BG/BH/BI=1-560"/>
</dbReference>
<dbReference type="PDB" id="8WLH">
    <property type="method" value="EM"/>
    <property type="resolution" value="3.70 A"/>
    <property type="chains" value="b/c/d/e/f/g/h/i/j/k/l=1-560"/>
</dbReference>
<dbReference type="PDB" id="8WLI">
    <property type="method" value="EM"/>
    <property type="resolution" value="3.20 A"/>
    <property type="chains" value="A/B/C/D/E/F/G/H/I/J/K/L/M/N/O/P/Q/R/S/T/U/V/W/X/Y/Z/a/b/c/d=1-560"/>
</dbReference>
<dbReference type="PDB" id="8WLN">
    <property type="method" value="EM"/>
    <property type="resolution" value="4.30 A"/>
    <property type="chains" value="0/1/2/3/4/5/6/7/8/9/AA/AB/AC/AD/AE/AF/AG/AH/AI/AJ/AK/AL/AM/AN/AO/AP/AQ/UI/UJ/UK=1-560"/>
</dbReference>
<dbReference type="PDB" id="8WLQ">
    <property type="method" value="EM"/>
    <property type="resolution" value="3.80 A"/>
    <property type="chains" value="b/c/d/e/f/g/h/i/j/k/l=1-560"/>
</dbReference>
<dbReference type="PDB" id="8WLT">
    <property type="method" value="EM"/>
    <property type="resolution" value="4.10 A"/>
    <property type="chains" value="AO/AP/AQ/AR/AS/AT/AU/AV/AW/AX/AY/AZ/Aa/Ac/Ad/Ae/Af/Ag/Ah/Ai/Aj/Ak/Al/Am/An/Ao/Ap/BG/BH/BI=1-560"/>
</dbReference>
<dbReference type="PDB" id="8WO5">
    <property type="method" value="EM"/>
    <property type="resolution" value="7.40 A"/>
    <property type="chains" value="AO/AP/AQ/AR/AS/AT/AU/AV/AW/AX/AY/AZ/Aa/Ac/Ad/Ae/Af/Ag/Ah/Ai/Aj/Ak/Al/Am/An/Ao/Ap/B6/BG/BH=1-560"/>
</dbReference>
<dbReference type="PDB" id="8WOE">
    <property type="method" value="EM"/>
    <property type="resolution" value="4.30 A"/>
    <property type="chains" value="AO/AP/AQ/AR/AS/AT/AU/AV/AW/AX/AY/AZ/Aa/Ac/Ad/Ae/Af/Ag/Ah/Ai/Aj/Ak/Al/Am/An/Ao/Ap/B0/B3/BG=1-560"/>
</dbReference>
<dbReference type="PDB" id="8XP0">
    <property type="method" value="EM"/>
    <property type="resolution" value="4.00 A"/>
    <property type="chains" value="N/T/Z=1-560"/>
</dbReference>
<dbReference type="PDB" id="8XP1">
    <property type="method" value="EM"/>
    <property type="resolution" value="4.40 A"/>
    <property type="chains" value="C/D/E=1-560"/>
</dbReference>
<dbReference type="PDB" id="8YJT">
    <property type="method" value="EM"/>
    <property type="resolution" value="5.90 A"/>
    <property type="chains" value="0/4/A2/A8/AF/AL/AR/AX/Ad/Aj/Ap/Av/B6/BD/BJ/BP/BV/Bb/Bh/Bn/Bt/Bz/CB/CH/CN/CT/CZ/Cf/Cl/Cr=1-560"/>
</dbReference>
<dbReference type="PDB" id="8ZDS">
    <property type="method" value="EM"/>
    <property type="resolution" value="3.10 A"/>
    <property type="chains" value="A/B/C/D/E/F/G/H/I/J/K/L/M/N/O/P/Q/R/S/T/U/V/W/X/Y/Z/a/b/c/d=1-560"/>
</dbReference>
<dbReference type="PDB" id="8ZDT">
    <property type="method" value="EM"/>
    <property type="resolution" value="2.40 A"/>
    <property type="chains" value="A/B/C/D/E/F/G/H/I/J/K/L/M/N/O/P/Q/R/S/T/U/V/W/X/Y/Z/a/b/c/d=1-560"/>
</dbReference>
<dbReference type="PDB" id="8ZDU">
    <property type="method" value="EM"/>
    <property type="resolution" value="2.50 A"/>
    <property type="chains" value="A/B/C/D/E/F/G/H/I/J/K/L/M/N/O/P/Q/R/S/T/U/V/W/X/Y/Z/a/b/c/d=1-560"/>
</dbReference>
<dbReference type="PDB" id="9N49">
    <property type="method" value="EM"/>
    <property type="resolution" value="3.00 A"/>
    <property type="chains" value="F=1-560"/>
</dbReference>
<dbReference type="PDBsum" id="6SCN"/>
<dbReference type="PDBsum" id="6SD1"/>
<dbReference type="PDBsum" id="6SD2"/>
<dbReference type="PDBsum" id="6SD3"/>
<dbReference type="PDBsum" id="6SD4"/>
<dbReference type="PDBsum" id="6SD5"/>
<dbReference type="PDBsum" id="6TRE"/>
<dbReference type="PDBsum" id="7BK0"/>
<dbReference type="PDBsum" id="7CG0"/>
<dbReference type="PDBsum" id="7CG7"/>
<dbReference type="PDBsum" id="7D84"/>
<dbReference type="PDBsum" id="7E80"/>
<dbReference type="PDBsum" id="7E81"/>
<dbReference type="PDBsum" id="7E82"/>
<dbReference type="PDBsum" id="7NVG"/>
<dbReference type="PDBsum" id="8FTE"/>
<dbReference type="PDBsum" id="8FTF"/>
<dbReference type="PDBsum" id="8T8P"/>
<dbReference type="PDBsum" id="8UMD"/>
<dbReference type="PDBsum" id="8UMX"/>
<dbReference type="PDBsum" id="8UOX"/>
<dbReference type="PDBsum" id="8UPL"/>
<dbReference type="PDBsum" id="8VIB"/>
<dbReference type="PDBsum" id="8VID"/>
<dbReference type="PDBsum" id="8VKQ"/>
<dbReference type="PDBsum" id="8VKR"/>
<dbReference type="PDBsum" id="8WIW"/>
<dbReference type="PDBsum" id="8WJR"/>
<dbReference type="PDBsum" id="8WK3"/>
<dbReference type="PDBsum" id="8WK4"/>
<dbReference type="PDBsum" id="8WKK"/>
<dbReference type="PDBsum" id="8WKQ"/>
<dbReference type="PDBsum" id="8WL2"/>
<dbReference type="PDBsum" id="8WLH"/>
<dbReference type="PDBsum" id="8WLI"/>
<dbReference type="PDBsum" id="8WLN"/>
<dbReference type="PDBsum" id="8WLQ"/>
<dbReference type="PDBsum" id="8WLT"/>
<dbReference type="PDBsum" id="8WO5"/>
<dbReference type="PDBsum" id="8WOE"/>
<dbReference type="PDBsum" id="8XP0"/>
<dbReference type="PDBsum" id="8XP1"/>
<dbReference type="PDBsum" id="8YJT"/>
<dbReference type="PDBsum" id="8ZDS"/>
<dbReference type="PDBsum" id="8ZDT"/>
<dbReference type="PDBsum" id="8ZDU"/>
<dbReference type="PDBsum" id="9N49"/>
<dbReference type="EMDB" id="EMD-10145"/>
<dbReference type="EMDB" id="EMD-10146"/>
<dbReference type="EMDB" id="EMD-10147"/>
<dbReference type="EMDB" id="EMD-10148"/>
<dbReference type="EMDB" id="EMD-10149"/>
<dbReference type="EMDB" id="EMD-10560"/>
<dbReference type="EMDB" id="EMD-12195"/>
<dbReference type="EMDB" id="EMD-12603"/>
<dbReference type="EMDB" id="EMD-29424"/>
<dbReference type="EMDB" id="EMD-29425"/>
<dbReference type="EMDB" id="EMD-30348"/>
<dbReference type="EMDB" id="EMD-30351"/>
<dbReference type="EMDB" id="EMD-30612"/>
<dbReference type="EMDB" id="EMD-31006"/>
<dbReference type="EMDB" id="EMD-31007"/>
<dbReference type="EMDB" id="EMD-31008"/>
<dbReference type="EMDB" id="EMD-37570"/>
<dbReference type="EMDB" id="EMD-37590"/>
<dbReference type="EMDB" id="EMD-37594"/>
<dbReference type="EMDB" id="EMD-37595"/>
<dbReference type="EMDB" id="EMD-37601"/>
<dbReference type="EMDB" id="EMD-37605"/>
<dbReference type="EMDB" id="EMD-37611"/>
<dbReference type="EMDB" id="EMD-37619"/>
<dbReference type="EMDB" id="EMD-37620"/>
<dbReference type="EMDB" id="EMD-37625"/>
<dbReference type="EMDB" id="EMD-37628"/>
<dbReference type="EMDB" id="EMD-37630"/>
<dbReference type="EMDB" id="EMD-37679"/>
<dbReference type="EMDB" id="EMD-37684"/>
<dbReference type="EMDB" id="EMD-38546"/>
<dbReference type="EMDB" id="EMD-38547"/>
<dbReference type="EMDB" id="EMD-39349"/>
<dbReference type="EMDB" id="EMD-41100"/>
<dbReference type="EMDB" id="EMD-41101"/>
<dbReference type="EMDB" id="EMD-42376"/>
<dbReference type="EMDB" id="EMD-42387"/>
<dbReference type="EMDB" id="EMD-42439"/>
<dbReference type="EMDB" id="EMD-42451"/>
<dbReference type="EMDB" id="EMD-43256"/>
<dbReference type="EMDB" id="EMD-43258"/>
<dbReference type="EMDB" id="EMD-43327"/>
<dbReference type="EMDB" id="EMD-43328"/>
<dbReference type="EMDB" id="EMD-48871"/>
<dbReference type="EMDB" id="EMD-60007"/>
<dbReference type="EMDB" id="EMD-60008"/>
<dbReference type="EMDB" id="EMD-60009"/>
<dbReference type="SMR" id="P15928"/>
<dbReference type="IntAct" id="P15928">
    <property type="interactions" value="2"/>
</dbReference>
<dbReference type="STRING" id="99287.STM1969"/>
<dbReference type="TCDB" id="3.A.6.2.1">
    <property type="family name" value="the type iii (virulence-related) secretory pathway (iiisp) family"/>
</dbReference>
<dbReference type="PaxDb" id="99287-STM1969"/>
<dbReference type="GeneID" id="1253490"/>
<dbReference type="KEGG" id="stm:STM1969"/>
<dbReference type="PATRIC" id="fig|99287.12.peg.2086"/>
<dbReference type="HOGENOM" id="CLU_028108_1_0_6"/>
<dbReference type="OMA" id="FGTTSQM"/>
<dbReference type="PhylomeDB" id="P15928"/>
<dbReference type="BioCyc" id="SENT99287:STM1969-MONOMER"/>
<dbReference type="Proteomes" id="UP000001014">
    <property type="component" value="Chromosome"/>
</dbReference>
<dbReference type="GO" id="GO:0009431">
    <property type="term" value="C:bacterial-type flagellum basal body, MS ring"/>
    <property type="evidence" value="ECO:0007669"/>
    <property type="project" value="InterPro"/>
</dbReference>
<dbReference type="GO" id="GO:0005886">
    <property type="term" value="C:plasma membrane"/>
    <property type="evidence" value="ECO:0007669"/>
    <property type="project" value="UniProtKB-SubCell"/>
</dbReference>
<dbReference type="GO" id="GO:0003774">
    <property type="term" value="F:cytoskeletal motor activity"/>
    <property type="evidence" value="ECO:0007669"/>
    <property type="project" value="InterPro"/>
</dbReference>
<dbReference type="GO" id="GO:0071973">
    <property type="term" value="P:bacterial-type flagellum-dependent cell motility"/>
    <property type="evidence" value="ECO:0007669"/>
    <property type="project" value="InterPro"/>
</dbReference>
<dbReference type="Gene3D" id="3.30.300.30">
    <property type="match status" value="1"/>
</dbReference>
<dbReference type="InterPro" id="IPR045851">
    <property type="entry name" value="AMP-bd_C_sf"/>
</dbReference>
<dbReference type="InterPro" id="IPR013556">
    <property type="entry name" value="Flag_M-ring_C"/>
</dbReference>
<dbReference type="InterPro" id="IPR000067">
    <property type="entry name" value="FlgMring_FliF"/>
</dbReference>
<dbReference type="InterPro" id="IPR006182">
    <property type="entry name" value="FliF_N_dom"/>
</dbReference>
<dbReference type="InterPro" id="IPR043427">
    <property type="entry name" value="YscJ/FliF"/>
</dbReference>
<dbReference type="NCBIfam" id="TIGR00206">
    <property type="entry name" value="fliF"/>
    <property type="match status" value="1"/>
</dbReference>
<dbReference type="PANTHER" id="PTHR30046">
    <property type="entry name" value="FLAGELLAR M-RING PROTEIN"/>
    <property type="match status" value="1"/>
</dbReference>
<dbReference type="PANTHER" id="PTHR30046:SF0">
    <property type="entry name" value="FLAGELLAR M-RING PROTEIN"/>
    <property type="match status" value="1"/>
</dbReference>
<dbReference type="Pfam" id="PF01514">
    <property type="entry name" value="YscJ_FliF"/>
    <property type="match status" value="1"/>
</dbReference>
<dbReference type="Pfam" id="PF08345">
    <property type="entry name" value="YscJ_FliF_C"/>
    <property type="match status" value="1"/>
</dbReference>
<dbReference type="PIRSF" id="PIRSF004862">
    <property type="entry name" value="FliF"/>
    <property type="match status" value="1"/>
</dbReference>
<dbReference type="PRINTS" id="PR01009">
    <property type="entry name" value="FLGMRINGFLIF"/>
</dbReference>
<organism>
    <name type="scientific">Salmonella typhimurium (strain LT2 / SGSC1412 / ATCC 700720)</name>
    <dbReference type="NCBI Taxonomy" id="99287"/>
    <lineage>
        <taxon>Bacteria</taxon>
        <taxon>Pseudomonadati</taxon>
        <taxon>Pseudomonadota</taxon>
        <taxon>Gammaproteobacteria</taxon>
        <taxon>Enterobacterales</taxon>
        <taxon>Enterobacteriaceae</taxon>
        <taxon>Salmonella</taxon>
    </lineage>
</organism>
<sequence>MSATASTATQPKPLEWLNRLRANPRIPLIVAGSAAVAIVVAMVLWAKTPDYRTLFSNLSDQDGGAIVAQLTQMNIPYRFANGSGAIEVPADKVHELRLRLAQQGLPKGGAVGFELLDQEKFGISQFSEQVNYQRALEGELARTIETLGPVKSARVHLAMPKPSLFVREQKSPSASVTVTLEPGRALDEGQISAVVHLVSSAVAGLPPGNVTLVDQSGHLLTQSNTSGRDLNDAQLKFANDVESRIQRRIEAILSPIVGNGNVHAQVTAQLDFANKEQTEEHYSPNGDASKATLRSRQLNISEQVGAGYPGGVPGALSNQPAPPNEAPIATPPTNQQNAQNTPQTSTSTNSNSAGPRSTQRNETSNYEVDRTIRHTKMNVGDIERLSVAVVVNYKTLADGKPLPLTADQMKQIEDLTREAMGFSDKRGDTLNVVNSPFSAVDNTGGELPFWQQQSFIDQLLAAGRWLLVLVVAWILWRKAVRPQLTRRVEEAKAAQEQAQVRQETEEAVEVRLSKDEQLQQRRANQRLGAEVMSQRIREMSDNDPRVVALVIRQWMSNDHE</sequence>
<comment type="function">
    <text>The M ring may be actively involved in energy transduction.</text>
</comment>
<comment type="subunit">
    <text>The basal body constitutes a major portion of the flagellar organelle and consists of four rings (L,P,S, and M) mounted on a central rod. The M ring is integral to the inner membrane of the cell and may be connected to the flagellar rod via the S ring. The S (supramembrane ring) lies just distal to the M ring. The L and P rings lie in the outer membrane and the periplasmic space, respectively.</text>
</comment>
<comment type="interaction">
    <interactant intactId="EBI-2012119">
        <id>P15928</id>
    </interactant>
    <interactant intactId="EBI-2012130">
        <id>P0A1J9</id>
        <label>fliG</label>
    </interactant>
    <organismsDiffer>false</organismsDiffer>
    <experiments>4</experiments>
</comment>
<comment type="subcellular location">
    <subcellularLocation>
        <location>Cell inner membrane</location>
        <topology>Multi-pass membrane protein</topology>
    </subcellularLocation>
    <subcellularLocation>
        <location>Bacterial flagellum basal body</location>
    </subcellularLocation>
</comment>
<comment type="induction">
    <text evidence="3">Inhibited in nutrient-poor medium.</text>
</comment>
<comment type="similarity">
    <text evidence="4">Belongs to the FliF family.</text>
</comment>
<keyword id="KW-0002">3D-structure</keyword>
<keyword id="KW-0975">Bacterial flagellum</keyword>
<keyword id="KW-0997">Cell inner membrane</keyword>
<keyword id="KW-1003">Cell membrane</keyword>
<keyword id="KW-0472">Membrane</keyword>
<keyword id="KW-1185">Reference proteome</keyword>
<keyword id="KW-0812">Transmembrane</keyword>
<keyword id="KW-1133">Transmembrane helix</keyword>
<evidence type="ECO:0000255" key="1"/>
<evidence type="ECO:0000256" key="2">
    <source>
        <dbReference type="SAM" id="MobiDB-lite"/>
    </source>
</evidence>
<evidence type="ECO:0000269" key="3">
    <source>
    </source>
</evidence>
<evidence type="ECO:0000305" key="4"/>
<evidence type="ECO:0007829" key="5">
    <source>
        <dbReference type="PDB" id="6SCN"/>
    </source>
</evidence>
<evidence type="ECO:0007829" key="6">
    <source>
        <dbReference type="PDB" id="6SD1"/>
    </source>
</evidence>
<evidence type="ECO:0007829" key="7">
    <source>
        <dbReference type="PDB" id="7CG0"/>
    </source>
</evidence>